<organism>
    <name type="scientific">Loxosceles intermedia</name>
    <name type="common">Brown spider</name>
    <dbReference type="NCBI Taxonomy" id="58218"/>
    <lineage>
        <taxon>Eukaryota</taxon>
        <taxon>Metazoa</taxon>
        <taxon>Ecdysozoa</taxon>
        <taxon>Arthropoda</taxon>
        <taxon>Chelicerata</taxon>
        <taxon>Arachnida</taxon>
        <taxon>Araneae</taxon>
        <taxon>Araneomorphae</taxon>
        <taxon>Haplogynae</taxon>
        <taxon>Scytodoidea</taxon>
        <taxon>Sicariidae</taxon>
        <taxon>Loxosceles</taxon>
    </lineage>
</organism>
<proteinExistence type="evidence at transcript level"/>
<comment type="function">
    <text evidence="2 4">Dermonecrotic toxins cleave the phosphodiester linkage between the phosphate and headgroup of certain phospholipids (sphingolipid and lysolipid substrates), forming an alcohol (often choline) and a cyclic phosphate (By similarity). This toxin acts on sphingomyelin (SM) (By similarity). It may also act on ceramide phosphoethanolamine (CPE), lysophosphatidylcholine (LPC) and lysophosphatidylethanolamine (LPE), but not on lysophosphatidylserine (LPS), and lysophosphatidylglycerol (LPG) (By similarity). It acts by transphosphatidylation, releasing exclusively cyclic phosphate products as second products (By similarity). Induces dermonecrosis, hemolysis, increased vascular permeability, edema, inflammatory response, and platelet aggregation (By similarity).</text>
</comment>
<comment type="catalytic activity">
    <reaction evidence="2">
        <text>an N-(acyl)-sphingosylphosphocholine = an N-(acyl)-sphingosyl-1,3-cyclic phosphate + choline</text>
        <dbReference type="Rhea" id="RHEA:60652"/>
        <dbReference type="ChEBI" id="CHEBI:15354"/>
        <dbReference type="ChEBI" id="CHEBI:64583"/>
        <dbReference type="ChEBI" id="CHEBI:143892"/>
    </reaction>
</comment>
<comment type="catalytic activity">
    <reaction evidence="2">
        <text>an N-(acyl)-sphingosylphosphoethanolamine = an N-(acyl)-sphingosyl-1,3-cyclic phosphate + ethanolamine</text>
        <dbReference type="Rhea" id="RHEA:60648"/>
        <dbReference type="ChEBI" id="CHEBI:57603"/>
        <dbReference type="ChEBI" id="CHEBI:143891"/>
        <dbReference type="ChEBI" id="CHEBI:143892"/>
    </reaction>
</comment>
<comment type="catalytic activity">
    <reaction evidence="2">
        <text>a 1-acyl-sn-glycero-3-phosphocholine = a 1-acyl-sn-glycero-2,3-cyclic phosphate + choline</text>
        <dbReference type="Rhea" id="RHEA:60700"/>
        <dbReference type="ChEBI" id="CHEBI:15354"/>
        <dbReference type="ChEBI" id="CHEBI:58168"/>
        <dbReference type="ChEBI" id="CHEBI:143947"/>
    </reaction>
</comment>
<comment type="catalytic activity">
    <reaction evidence="2">
        <text>a 1-acyl-sn-glycero-3-phosphoethanolamine = a 1-acyl-sn-glycero-2,3-cyclic phosphate + ethanolamine</text>
        <dbReference type="Rhea" id="RHEA:60704"/>
        <dbReference type="ChEBI" id="CHEBI:57603"/>
        <dbReference type="ChEBI" id="CHEBI:64381"/>
        <dbReference type="ChEBI" id="CHEBI:143947"/>
    </reaction>
</comment>
<comment type="cofactor">
    <cofactor evidence="6">
        <name>Mg(2+)</name>
        <dbReference type="ChEBI" id="CHEBI:18420"/>
    </cofactor>
    <text evidence="6">Binds 1 Mg(2+) ion per subunit.</text>
</comment>
<comment type="subcellular location">
    <subcellularLocation>
        <location evidence="9">Secreted</location>
    </subcellularLocation>
</comment>
<comment type="tissue specificity">
    <text evidence="9">Expressed by the venom gland.</text>
</comment>
<comment type="similarity">
    <text evidence="8">Belongs to the arthropod phospholipase D family. Class II subfamily.</text>
</comment>
<comment type="caution">
    <text evidence="2 3 5">The most common activity assay for dermonecrotic toxins detects enzymatic activity by monitoring choline release from substrate. Liberation of choline from sphingomyelin (SM) or lysophosphatidylcholine (LPC) is commonly assumed to result from substrate hydrolysis, giving either ceramide-1-phosphate (C1P) or lysophosphatidic acid (LPA), respectively, as a second product. However, two studies from Lajoie and colleagues (2013 and 2015) report the observation of exclusive formation of cyclic phosphate products as second products, resulting from intramolecular transphosphatidylation. Cyclic phosphates have vastly different biological properties from their monoester counterparts, and they may be relevant to the pathology of brown spider envenomation.</text>
</comment>
<accession>B2KKV6</accession>
<protein>
    <recommendedName>
        <fullName>Dermonecrotic toxin LiSicTox-alphaIA2bi</fullName>
        <ecNumber evidence="5">4.6.1.-</ecNumber>
    </recommendedName>
    <alternativeName>
        <fullName>Loxtox i1</fullName>
    </alternativeName>
    <alternativeName>
        <fullName>Phospholipase D</fullName>
        <shortName>PLD</shortName>
    </alternativeName>
    <alternativeName>
        <fullName>Sphingomyelin phosphodiesterase D</fullName>
        <shortName>SMD</shortName>
        <shortName>SMase D</shortName>
        <shortName>Sphingomyelinase D</shortName>
    </alternativeName>
</protein>
<sequence>MLPYIALILVCWSVLSQAAQTDVEGRADKRRPIWIMGHMVNAIAQIDEFVNLGANSIETDVSFDDNANPEYTYHGVPCDCGRSCLKWENFNDFLKGLRSATTPGNAKYQAKLILVVFDLKTGSLYDNQANEAGKKLAKNLLKHYWNNGNNGGRAYIVLSIPDLNHYPLIKGFKDQLTQDGHPELMDKVGHDFSGNDAIGDVGNAYKKAGISGHVWQSDGITNCLLRGLDRVKQAIANRDSGNGFINKVYYWTVDKRATTRDALDAGVDGVMTNYPDVITDVLNESAYKNKFRVASYEDNPWETFKK</sequence>
<name>A1IB1_LOXIN</name>
<feature type="signal peptide" evidence="7">
    <location>
        <begin position="1"/>
        <end position="18"/>
    </location>
</feature>
<feature type="propeptide" id="PRO_0000380633" evidence="1">
    <location>
        <begin position="19"/>
        <end position="26"/>
    </location>
</feature>
<feature type="chain" id="PRO_0000380634" description="Dermonecrotic toxin LiSicTox-alphaIA2bi">
    <location>
        <begin position="27"/>
        <end position="306"/>
    </location>
</feature>
<feature type="active site" evidence="6">
    <location>
        <position position="38"/>
    </location>
</feature>
<feature type="active site" description="Nucleophile" evidence="6">
    <location>
        <position position="74"/>
    </location>
</feature>
<feature type="binding site" evidence="6">
    <location>
        <position position="58"/>
    </location>
    <ligand>
        <name>Mg(2+)</name>
        <dbReference type="ChEBI" id="CHEBI:18420"/>
    </ligand>
</feature>
<feature type="binding site" evidence="6">
    <location>
        <position position="60"/>
    </location>
    <ligand>
        <name>Mg(2+)</name>
        <dbReference type="ChEBI" id="CHEBI:18420"/>
    </ligand>
</feature>
<feature type="binding site" evidence="6">
    <location>
        <position position="118"/>
    </location>
    <ligand>
        <name>Mg(2+)</name>
        <dbReference type="ChEBI" id="CHEBI:18420"/>
    </ligand>
</feature>
<feature type="glycosylation site" description="N-linked (GlcNAc...) asparagine" evidence="7">
    <location>
        <position position="283"/>
    </location>
</feature>
<feature type="disulfide bond" evidence="4">
    <location>
        <begin position="78"/>
        <end position="84"/>
    </location>
</feature>
<feature type="disulfide bond" evidence="4">
    <location>
        <begin position="80"/>
        <end position="223"/>
    </location>
</feature>
<keyword id="KW-0204">Cytolysis</keyword>
<keyword id="KW-1061">Dermonecrotic toxin</keyword>
<keyword id="KW-1015">Disulfide bond</keyword>
<keyword id="KW-0325">Glycoprotein</keyword>
<keyword id="KW-0354">Hemolysis</keyword>
<keyword id="KW-0442">Lipid degradation</keyword>
<keyword id="KW-0443">Lipid metabolism</keyword>
<keyword id="KW-0456">Lyase</keyword>
<keyword id="KW-0460">Magnesium</keyword>
<keyword id="KW-0479">Metal-binding</keyword>
<keyword id="KW-0964">Secreted</keyword>
<keyword id="KW-0732">Signal</keyword>
<keyword id="KW-0800">Toxin</keyword>
<keyword id="KW-0865">Zymogen</keyword>
<reference key="1">
    <citation type="journal article" date="2007" name="Toxicon">
        <title>The Loxtox protein family in Loxosceles intermedia (Mello-Leitao) venom.</title>
        <authorList>
            <person name="Kalapothakis E."/>
            <person name="Chatzaki M."/>
            <person name="Goncalves-Dornelas H."/>
            <person name="de Castro C.S."/>
            <person name="Silvestre F.G."/>
            <person name="Laborne F.V."/>
            <person name="de Moura J.F."/>
            <person name="Veiga S.S."/>
            <person name="Chavez-Olortegui C."/>
            <person name="Granier C."/>
            <person name="Barbaro K.C."/>
        </authorList>
    </citation>
    <scope>NUCLEOTIDE SEQUENCE [MRNA]</scope>
    <source>
        <tissue>Venom gland</tissue>
    </source>
</reference>
<evidence type="ECO:0000250" key="1"/>
<evidence type="ECO:0000250" key="2">
    <source>
        <dbReference type="UniProtKB" id="A0A0D4WTV1"/>
    </source>
</evidence>
<evidence type="ECO:0000250" key="3">
    <source>
        <dbReference type="UniProtKB" id="A0A0D4WV12"/>
    </source>
</evidence>
<evidence type="ECO:0000250" key="4">
    <source>
        <dbReference type="UniProtKB" id="P0CE80"/>
    </source>
</evidence>
<evidence type="ECO:0000250" key="5">
    <source>
        <dbReference type="UniProtKB" id="Q4ZFU2"/>
    </source>
</evidence>
<evidence type="ECO:0000250" key="6">
    <source>
        <dbReference type="UniProtKB" id="Q8I914"/>
    </source>
</evidence>
<evidence type="ECO:0000255" key="7"/>
<evidence type="ECO:0000305" key="8"/>
<evidence type="ECO:0000305" key="9">
    <source>
    </source>
</evidence>
<dbReference type="EC" id="4.6.1.-" evidence="5"/>
<dbReference type="EMBL" id="EF535250">
    <property type="protein sequence ID" value="ABU43329.1"/>
    <property type="molecule type" value="mRNA"/>
</dbReference>
<dbReference type="SMR" id="B2KKV6"/>
<dbReference type="ArachnoServer" id="AS000492">
    <property type="toxin name" value="Sphingomyelinase D (LiSicTox-alphaIA2bi)"/>
</dbReference>
<dbReference type="GO" id="GO:0005576">
    <property type="term" value="C:extracellular region"/>
    <property type="evidence" value="ECO:0007669"/>
    <property type="project" value="UniProtKB-SubCell"/>
</dbReference>
<dbReference type="GO" id="GO:0016829">
    <property type="term" value="F:lyase activity"/>
    <property type="evidence" value="ECO:0007669"/>
    <property type="project" value="UniProtKB-KW"/>
</dbReference>
<dbReference type="GO" id="GO:0046872">
    <property type="term" value="F:metal ion binding"/>
    <property type="evidence" value="ECO:0007669"/>
    <property type="project" value="UniProtKB-KW"/>
</dbReference>
<dbReference type="GO" id="GO:0008081">
    <property type="term" value="F:phosphoric diester hydrolase activity"/>
    <property type="evidence" value="ECO:0007669"/>
    <property type="project" value="InterPro"/>
</dbReference>
<dbReference type="GO" id="GO:0090729">
    <property type="term" value="F:toxin activity"/>
    <property type="evidence" value="ECO:0007669"/>
    <property type="project" value="UniProtKB-KW"/>
</dbReference>
<dbReference type="GO" id="GO:0031640">
    <property type="term" value="P:killing of cells of another organism"/>
    <property type="evidence" value="ECO:0007669"/>
    <property type="project" value="UniProtKB-KW"/>
</dbReference>
<dbReference type="GO" id="GO:0016042">
    <property type="term" value="P:lipid catabolic process"/>
    <property type="evidence" value="ECO:0007669"/>
    <property type="project" value="UniProtKB-KW"/>
</dbReference>
<dbReference type="CDD" id="cd08576">
    <property type="entry name" value="GDPD_like_SMaseD_PLD"/>
    <property type="match status" value="1"/>
</dbReference>
<dbReference type="Gene3D" id="3.20.20.190">
    <property type="entry name" value="Phosphatidylinositol (PI) phosphodiesterase"/>
    <property type="match status" value="1"/>
</dbReference>
<dbReference type="InterPro" id="IPR017946">
    <property type="entry name" value="PLC-like_Pdiesterase_TIM-brl"/>
</dbReference>
<dbReference type="Pfam" id="PF13653">
    <property type="entry name" value="GDPD_2"/>
    <property type="match status" value="1"/>
</dbReference>
<dbReference type="SUPFAM" id="SSF51695">
    <property type="entry name" value="PLC-like phosphodiesterases"/>
    <property type="match status" value="1"/>
</dbReference>